<name>MAVS_RAT</name>
<keyword id="KW-0051">Antiviral defense</keyword>
<keyword id="KW-0945">Host-virus interaction</keyword>
<keyword id="KW-0391">Immunity</keyword>
<keyword id="KW-0399">Innate immunity</keyword>
<keyword id="KW-1017">Isopeptide bond</keyword>
<keyword id="KW-0449">Lipoprotein</keyword>
<keyword id="KW-0472">Membrane</keyword>
<keyword id="KW-0488">Methylation</keyword>
<keyword id="KW-0496">Mitochondrion</keyword>
<keyword id="KW-1000">Mitochondrion outer membrane</keyword>
<keyword id="KW-0564">Palmitate</keyword>
<keyword id="KW-0576">Peroxisome</keyword>
<keyword id="KW-0597">Phosphoprotein</keyword>
<keyword id="KW-1185">Reference proteome</keyword>
<keyword id="KW-0812">Transmembrane</keyword>
<keyword id="KW-1133">Transmembrane helix</keyword>
<keyword id="KW-0832">Ubl conjugation</keyword>
<sequence length="507" mass="53805">MTFAEEKTYKYIRYNHSKFCCVDVLEILPYLSCLTTSDQDRLRASYKQLGNQGTLWELFNTLQRRPGWVEVFIRALRICELPGLAEQVTRVYQSYLPPGASLHSLDPLQSPRIPTTVSEPSAFAAGHTIPDSGFQDKPGYPKPVQDTQPPKSPVENSEEPPQANFGAIPRMSGDSLISSPNPPALSPQPSREHPEQEPELGGPSTANVDSVPIATYGPVSPTVSFQPLPRIAPRTNLSPGVTVSALSAKTTLSSSSTGSAFAKGAGDQAKAATCVSTKEGVPTNSVTTSSVPSIKPVPVNTMSSKLPISTKSTAATPSTVPTNIAPSKLPINSVYTGIVPSKVTASVAKASASTMPPERNNKQAKETLEAPATVVTTGSSLTRPDISSRSLHSGPELSKPGVLVSQVDNEPFSACSMDLAISPSTSLGSEPNHGPEENEYSSFRIQVDKSPSVDLLGSPEPLATQQSPEEEEPCASSVSWAKWLGATSALLAAFLAVMLYRSRHLAQ</sequence>
<comment type="function">
    <text evidence="1">Adapter required for innate immune defense against viruses. Acts downstream of DHX33, RIGI and IFIH1/MDA5, which detect intracellular dsRNA produced during viral replication, to coordinate pathways leading to the activation of NF-kappa-B, IRF3 and IRF7, and to the subsequent induction of antiviral cytokines such as IFN-beta and RANTES (CCL5). Peroxisomal and mitochondrial MAVS act sequentially to create an antiviral cellular state. Upon viral infection, peroxisomal MAVS induces the rapid interferon-independent expression of defense factors that provide short-term protection, whereas mitochondrial MAVS activates an interferon-dependent signaling pathway with delayed kinetics, which amplifies and stabilizes the antiviral response. May activate the same pathways following detection of extracellular dsRNA by TLR3. May protect cells from apoptosis. Involved in NLRP3 inflammasome activation by mediating NLRP3 recruitment to mitochondria.</text>
</comment>
<comment type="subunit">
    <text evidence="1 2">Self-associates and polymerizes (via CARD domains) to form 400 nM long three-stranded helical filaments on mitochondria, filament nucleation requires interaction with RIGI whose CARD domains act as a template for filament assembly. Interacts with RIGI, IFIH1/MDA5, TRAF2, TRAF6 and C1QBP. May interact with FADD, RIPK1, CHUK and IKBKB. Interacts (when phosphorylated) with IRF3; following activation and phosphorylation on the pLxIS motif by TBK1, recruits IRF3. Interacts with NLRX1. Interaction with NLRX1 requires the CARD domain. Interacts with PSMA7 (By similarity). Interacts with TRAFD1 (By similarity). Interacts (via C-terminus) with PCBP2 in a complex containing MAVS/IPS1, PCBP2 and ITCH. Interacts with CYLD. Interacts with SRC. Interacts with DHX58/LGP2 and IKBKE. Interacts with STING1. Interacts with IFIT3 (via N-terminus). Interacts with TBK1 only in the presence of IFIT3. Interacts with TTLL12; the interaction prevents MAVS binding to TBK1 and IKBKE (By similarity). Interacts with MUL1. Interacts with ANKRD17. Interacts with NDFIP1. Interacts with SMURF1; the interaction is mediated by NDFIP1 and leads to MAVS ubiquitination and degradation. Interacts with UBXN1; this interaction inhibits MAVS-mediated antiviral pathway. Interacts (via C-terminus) with GPATCH3; the interaction is markedly increased upon viral infection. Directly interacts (via CARD domain) with ATG5 and ATG12, either as ATG5 and ATG12 monomers or as ATG12-ATG5 conjugates (By similarity). Interacts with DHX33 (via the helicase C-terminal domain) (By similarity). Interacts with DDX3X (via C-terminus); this interaction may occur rapidly, but transiently after viral infection (By similarity). The interaction with DDX3X potentiates MAVS-mediated IFNB induction (By similarity). Conversely inhibition of this interaction prevents MAVS-mediated IFNB induction (By similarity). Transiently interacts with TRAF3 early during viral infection (By similarity). Interacts with CLPB (By similarity). Interacts with TRAF3IP3 (By similarity). Interacts with TOMM70; the interaction is enhanced by virus infection (By similarity). Interacts with ZNFX1 (By similarity). Interacts with DHX15 (By similarity). Interacts with N4BP3; this interaction promotes the polyubiquitination of MAVS (By similarity). Interacts with TAX1BP1; this interaction induces MAVS polyubiquitination (By similarity). Interacts with NLRP3; promoting NLRP3 recruitment to mitochondria and activation of the NLRP3 inflammasome (By similarity). Interacts with ECSIT; this interaction bridges RIGI to the MAVS complex at the mitochondrion (By similarity). Interacts with UBL7; this interaction promotes MAVS 'Lys-27'-linked ubiquitination leading to type I interferon production (By similarity). Interacts (via transmembrane domain) with SMIM30/MAVI1 (via transmembrane domain); the interaction disrupts MAVS interaction with RIGI and inhibits MAVS aggregation, resulting in the repression of type I interferon signaling and innate immune responses (By similarity).</text>
</comment>
<comment type="subcellular location">
    <subcellularLocation>
        <location evidence="1">Mitochondrion outer membrane</location>
        <topology evidence="1">Single-pass membrane protein</topology>
    </subcellularLocation>
    <subcellularLocation>
        <location evidence="1">Mitochondrion</location>
    </subcellularLocation>
    <subcellularLocation>
        <location evidence="1">Peroxisome</location>
    </subcellularLocation>
</comment>
<comment type="domain">
    <text evidence="1">Both CARD and transmembrane domains are essential for antiviral function. The CARD domain is responsible for interaction with RIGI and IFIH1/MDA5 (By similarity).</text>
</comment>
<comment type="domain">
    <text evidence="1">The transmembrane domain and residues 288-424 are essential for its interaction with DHX58/LGP2.</text>
</comment>
<comment type="domain">
    <text evidence="1">The pLxIS motif constitutes an IRF3-binding motif: following phosphorylation by TBK1, the phosphorylated pLxIS motif of MAVS recruits IRF3. IRF3 is then phosphorylated and activated by TBK1 to induce type-I interferons and other cytokines.</text>
</comment>
<comment type="PTM">
    <text evidence="1">Following activation, phosphorylated by TBK1 at Ser-422 in the pLxIS motif. The phosphorylated pLxIS motif constitutes an IRF3-binding motif, leading to recruitment of the transcription factor IRF3 to induce type-I interferons and other cytokines.</text>
</comment>
<comment type="PTM">
    <text evidence="1">Ubiquitinated. Undergoes 'Lys-48'-linked polyubiquitination catalyzed by ITCH; ITCH-dependent polyubiquitination is mediated by the interaction with PCBP2 and leads to MAVS/IPS1 proteasomal degradation. Ubiquitinated by RNF125, leading to its degradation by the proteasome. Undergoes 'Lys-48'-linked ubiquitination catalyzed by SMURF1. Undergoes 'Lys-48'-linked ubiquitination catalyzed by MARCHF5 at Lys-7, leading to proteasomal degradation (By similarity). Ubiquitinated via 'Lys-63'-linked ubiquitination at Lys-10 by TRIM31, promoting MAVS polymerization and formation of three-stranded helical filaments on mitochondria. Undergoes 'Lys-63'-linked ubiquitination leading to enhanced interaction between MAVS and TRAF2. Undergoes 'Lys-27'-linked ubiquitination by UBE2N and TRIM21 leading to enhanced interaction between MAVS and TBK1 (By similarity). Deubiquitinated by USP10 leading to attenuation of RIGI-mediated MAVS aggregation and production of type I interferon (By similarity). Undergoes 'Lys-48'-linked polyubiquitination catalyzed by RNF115 leading to its degradation (By similarity).</text>
</comment>
<comment type="PTM">
    <text evidence="1">Proteolytically cleaved by apoptotic caspases during apoptosis, leading to its inactivation. Cleavage by CASP3 during virus-induced apoptosis inactivates it, preventing cytokine overproduction.</text>
</comment>
<comment type="PTM">
    <text evidence="1">Palmitoylated by ZHDDC4. Palmitoylation promotes MAVS stabilization and activation by inhibiting 'Lys-48'- but facilitating 'Lys-63'-linked ubiquitination.</text>
</comment>
<accession>Q66HG9</accession>
<organism>
    <name type="scientific">Rattus norvegicus</name>
    <name type="common">Rat</name>
    <dbReference type="NCBI Taxonomy" id="10116"/>
    <lineage>
        <taxon>Eukaryota</taxon>
        <taxon>Metazoa</taxon>
        <taxon>Chordata</taxon>
        <taxon>Craniata</taxon>
        <taxon>Vertebrata</taxon>
        <taxon>Euteleostomi</taxon>
        <taxon>Mammalia</taxon>
        <taxon>Eutheria</taxon>
        <taxon>Euarchontoglires</taxon>
        <taxon>Glires</taxon>
        <taxon>Rodentia</taxon>
        <taxon>Myomorpha</taxon>
        <taxon>Muroidea</taxon>
        <taxon>Muridae</taxon>
        <taxon>Murinae</taxon>
        <taxon>Rattus</taxon>
    </lineage>
</organism>
<evidence type="ECO:0000250" key="1">
    <source>
        <dbReference type="UniProtKB" id="Q7Z434"/>
    </source>
</evidence>
<evidence type="ECO:0000250" key="2">
    <source>
        <dbReference type="UniProtKB" id="Q8VCF0"/>
    </source>
</evidence>
<evidence type="ECO:0000255" key="3"/>
<evidence type="ECO:0000256" key="4">
    <source>
        <dbReference type="SAM" id="MobiDB-lite"/>
    </source>
</evidence>
<evidence type="ECO:0000305" key="5"/>
<evidence type="ECO:0007744" key="6">
    <source>
    </source>
</evidence>
<feature type="chain" id="PRO_0000144098" description="Mitochondrial antiviral-signaling protein">
    <location>
        <begin position="1"/>
        <end position="507"/>
    </location>
</feature>
<feature type="topological domain" description="Cytoplasmic" evidence="5">
    <location>
        <begin position="1"/>
        <end position="482"/>
    </location>
</feature>
<feature type="transmembrane region" description="Helical" evidence="3">
    <location>
        <begin position="483"/>
        <end position="500"/>
    </location>
</feature>
<feature type="topological domain" description="Mitochondrial intermembrane" evidence="5">
    <location>
        <begin position="501"/>
        <end position="507"/>
    </location>
</feature>
<feature type="domain" description="CARD">
    <location>
        <begin position="10"/>
        <end position="77"/>
    </location>
</feature>
<feature type="region of interest" description="Required for interaction with NLRX1" evidence="1">
    <location>
        <begin position="10"/>
        <end position="77"/>
    </location>
</feature>
<feature type="region of interest" description="Disordered" evidence="4">
    <location>
        <begin position="123"/>
        <end position="238"/>
    </location>
</feature>
<feature type="region of interest" description="Interaction with TRAF2" evidence="1">
    <location>
        <begin position="143"/>
        <end position="147"/>
    </location>
</feature>
<feature type="region of interest" description="Interaction with TRAF6" evidence="1">
    <location>
        <begin position="153"/>
        <end position="158"/>
    </location>
</feature>
<feature type="region of interest" description="Disordered" evidence="4">
    <location>
        <begin position="250"/>
        <end position="326"/>
    </location>
</feature>
<feature type="region of interest" description="Interaction with DHX33" evidence="2">
    <location>
        <begin position="340"/>
        <end position="507"/>
    </location>
</feature>
<feature type="region of interest" description="Disordered" evidence="4">
    <location>
        <begin position="350"/>
        <end position="401"/>
    </location>
</feature>
<feature type="region of interest" description="Disordered" evidence="4">
    <location>
        <begin position="423"/>
        <end position="474"/>
    </location>
</feature>
<feature type="region of interest" description="Interaction with TRAF6" evidence="1">
    <location>
        <begin position="435"/>
        <end position="440"/>
    </location>
</feature>
<feature type="short sequence motif" description="pLxIS motif" evidence="1">
    <location>
        <begin position="419"/>
        <end position="422"/>
    </location>
</feature>
<feature type="compositionally biased region" description="Low complexity" evidence="4">
    <location>
        <begin position="250"/>
        <end position="266"/>
    </location>
</feature>
<feature type="compositionally biased region" description="Low complexity" evidence="4">
    <location>
        <begin position="281"/>
        <end position="293"/>
    </location>
</feature>
<feature type="compositionally biased region" description="Polar residues" evidence="4">
    <location>
        <begin position="300"/>
        <end position="325"/>
    </location>
</feature>
<feature type="compositionally biased region" description="Basic and acidic residues" evidence="4">
    <location>
        <begin position="359"/>
        <end position="368"/>
    </location>
</feature>
<feature type="compositionally biased region" description="Polar residues" evidence="4">
    <location>
        <begin position="374"/>
        <end position="391"/>
    </location>
</feature>
<feature type="site" description="Cleavage; by CASP3" evidence="1">
    <location>
        <begin position="408"/>
        <end position="409"/>
    </location>
</feature>
<feature type="modified residue" description="Phosphoserine" evidence="6">
    <location>
        <position position="152"/>
    </location>
</feature>
<feature type="modified residue" description="Phosphoserine" evidence="1">
    <location>
        <position position="157"/>
    </location>
</feature>
<feature type="modified residue" description="Phosphoserine" evidence="2">
    <location>
        <position position="172"/>
    </location>
</feature>
<feature type="modified residue" description="Phosphoserine" evidence="1">
    <location>
        <position position="178"/>
    </location>
</feature>
<feature type="modified residue" description="Phosphoserine" evidence="1">
    <location>
        <position position="186"/>
    </location>
</feature>
<feature type="modified residue" description="Phosphoserine" evidence="1">
    <location>
        <position position="220"/>
    </location>
</feature>
<feature type="modified residue" description="Asymmetric dimethylarginine" evidence="2">
    <location>
        <position position="234"/>
    </location>
</feature>
<feature type="modified residue" description="Phosphoserine" evidence="1">
    <location>
        <position position="256"/>
    </location>
</feature>
<feature type="modified residue" description="Phosphoserine" evidence="2">
    <location>
        <position position="387"/>
    </location>
</feature>
<feature type="modified residue" description="Phosphoserine; by TBK1" evidence="1">
    <location>
        <position position="422"/>
    </location>
</feature>
<feature type="lipid moiety-binding region" description="S-palmitoyl cysteine" evidence="1">
    <location>
        <position position="79"/>
    </location>
</feature>
<feature type="cross-link" description="Glycyl lysine isopeptide (Lys-Gly) (interchain with G-Cter in ubiquitin)" evidence="1">
    <location>
        <position position="7"/>
    </location>
</feature>
<feature type="cross-link" description="Glycyl lysine isopeptide (Lys-Gly) (interchain with G-Cter in ubiquitin)" evidence="1">
    <location>
        <position position="10"/>
    </location>
</feature>
<feature type="cross-link" description="Glycyl lysine isopeptide (Lys-Gly) (interchain with G-Cter in ubiquitin)" evidence="1">
    <location>
        <position position="305"/>
    </location>
</feature>
<proteinExistence type="evidence at protein level"/>
<dbReference type="EMBL" id="BC081869">
    <property type="protein sequence ID" value="AAH81869.1"/>
    <property type="molecule type" value="mRNA"/>
</dbReference>
<dbReference type="RefSeq" id="NP_001005556.1">
    <property type="nucleotide sequence ID" value="NM_001005556.1"/>
</dbReference>
<dbReference type="RefSeq" id="XP_006235096.1">
    <property type="nucleotide sequence ID" value="XM_006235034.4"/>
</dbReference>
<dbReference type="RefSeq" id="XP_006235097.1">
    <property type="nucleotide sequence ID" value="XM_006235035.5"/>
</dbReference>
<dbReference type="RefSeq" id="XP_006235098.1">
    <property type="nucleotide sequence ID" value="XM_006235036.4"/>
</dbReference>
<dbReference type="RefSeq" id="XP_008760401.1">
    <property type="nucleotide sequence ID" value="XM_008762179.2"/>
</dbReference>
<dbReference type="RefSeq" id="XP_063139844.1">
    <property type="nucleotide sequence ID" value="XM_063283774.1"/>
</dbReference>
<dbReference type="RefSeq" id="XP_063139845.1">
    <property type="nucleotide sequence ID" value="XM_063283775.1"/>
</dbReference>
<dbReference type="RefSeq" id="XP_063139846.1">
    <property type="nucleotide sequence ID" value="XM_063283776.1"/>
</dbReference>
<dbReference type="RefSeq" id="XP_063139848.1">
    <property type="nucleotide sequence ID" value="XM_063283778.1"/>
</dbReference>
<dbReference type="SMR" id="Q66HG9"/>
<dbReference type="FunCoup" id="Q66HG9">
    <property type="interactions" value="455"/>
</dbReference>
<dbReference type="IntAct" id="Q66HG9">
    <property type="interactions" value="1"/>
</dbReference>
<dbReference type="MINT" id="Q66HG9"/>
<dbReference type="STRING" id="10116.ENSRNOP00000033476"/>
<dbReference type="GlyGen" id="Q66HG9">
    <property type="glycosylation" value="3 sites, 1 O-linked glycan (1 site)"/>
</dbReference>
<dbReference type="iPTMnet" id="Q66HG9"/>
<dbReference type="PhosphoSitePlus" id="Q66HG9"/>
<dbReference type="jPOST" id="Q66HG9"/>
<dbReference type="PaxDb" id="10116-ENSRNOP00000033476"/>
<dbReference type="Ensembl" id="ENSRNOT00000090764.2">
    <property type="protein sequence ID" value="ENSRNOP00000073053.1"/>
    <property type="gene ID" value="ENSRNOG00000025295.5"/>
</dbReference>
<dbReference type="GeneID" id="311430"/>
<dbReference type="KEGG" id="rno:311430"/>
<dbReference type="UCSC" id="RGD:1359371">
    <property type="organism name" value="rat"/>
</dbReference>
<dbReference type="AGR" id="RGD:1359371"/>
<dbReference type="CTD" id="57506"/>
<dbReference type="RGD" id="1359371">
    <property type="gene designation" value="Mavs"/>
</dbReference>
<dbReference type="eggNOG" id="ENOG502SAUA">
    <property type="taxonomic scope" value="Eukaryota"/>
</dbReference>
<dbReference type="GeneTree" id="ENSGT00510000049120"/>
<dbReference type="InParanoid" id="Q66HG9"/>
<dbReference type="OMA" id="PHIDQKF"/>
<dbReference type="OrthoDB" id="9909785at2759"/>
<dbReference type="PhylomeDB" id="Q66HG9"/>
<dbReference type="TreeFam" id="TF333444"/>
<dbReference type="Reactome" id="R-RNO-168928">
    <property type="pathway name" value="DDX58/IFIH1-mediated induction of interferon-alpha/beta"/>
</dbReference>
<dbReference type="Reactome" id="R-RNO-936440">
    <property type="pathway name" value="Negative regulators of DDX58/IFIH1 signaling"/>
</dbReference>
<dbReference type="Reactome" id="R-RNO-9833482">
    <property type="pathway name" value="PKR-mediated signaling"/>
</dbReference>
<dbReference type="PRO" id="PR:Q66HG9"/>
<dbReference type="Proteomes" id="UP000002494">
    <property type="component" value="Chromosome 3"/>
</dbReference>
<dbReference type="Bgee" id="ENSRNOG00000025295">
    <property type="expression patterns" value="Expressed in heart and 19 other cell types or tissues"/>
</dbReference>
<dbReference type="GO" id="GO:0005737">
    <property type="term" value="C:cytoplasm"/>
    <property type="evidence" value="ECO:0000266"/>
    <property type="project" value="RGD"/>
</dbReference>
<dbReference type="GO" id="GO:0031966">
    <property type="term" value="C:mitochondrial membrane"/>
    <property type="evidence" value="ECO:0000266"/>
    <property type="project" value="RGD"/>
</dbReference>
<dbReference type="GO" id="GO:0005741">
    <property type="term" value="C:mitochondrial outer membrane"/>
    <property type="evidence" value="ECO:0000266"/>
    <property type="project" value="RGD"/>
</dbReference>
<dbReference type="GO" id="GO:0005739">
    <property type="term" value="C:mitochondrion"/>
    <property type="evidence" value="ECO:0000250"/>
    <property type="project" value="UniProtKB"/>
</dbReference>
<dbReference type="GO" id="GO:0005778">
    <property type="term" value="C:peroxisomal membrane"/>
    <property type="evidence" value="ECO:0000266"/>
    <property type="project" value="RGD"/>
</dbReference>
<dbReference type="GO" id="GO:0005777">
    <property type="term" value="C:peroxisome"/>
    <property type="evidence" value="ECO:0000266"/>
    <property type="project" value="RGD"/>
</dbReference>
<dbReference type="GO" id="GO:0050700">
    <property type="term" value="F:CARD domain binding"/>
    <property type="evidence" value="ECO:0000266"/>
    <property type="project" value="RGD"/>
</dbReference>
<dbReference type="GO" id="GO:0042802">
    <property type="term" value="F:identical protein binding"/>
    <property type="evidence" value="ECO:0000266"/>
    <property type="project" value="RGD"/>
</dbReference>
<dbReference type="GO" id="GO:0060090">
    <property type="term" value="F:molecular adaptor activity"/>
    <property type="evidence" value="ECO:0000266"/>
    <property type="project" value="RGD"/>
</dbReference>
<dbReference type="GO" id="GO:0140693">
    <property type="term" value="F:molecular condensate scaffold activity"/>
    <property type="evidence" value="ECO:0000266"/>
    <property type="project" value="RGD"/>
</dbReference>
<dbReference type="GO" id="GO:0019901">
    <property type="term" value="F:protein kinase binding"/>
    <property type="evidence" value="ECO:0000266"/>
    <property type="project" value="RGD"/>
</dbReference>
<dbReference type="GO" id="GO:0030674">
    <property type="term" value="F:protein-macromolecule adaptor activity"/>
    <property type="evidence" value="ECO:0000266"/>
    <property type="project" value="RGD"/>
</dbReference>
<dbReference type="GO" id="GO:0039552">
    <property type="term" value="F:RIG-I binding"/>
    <property type="evidence" value="ECO:0000266"/>
    <property type="project" value="RGD"/>
</dbReference>
<dbReference type="GO" id="GO:0035591">
    <property type="term" value="F:signaling adaptor activity"/>
    <property type="evidence" value="ECO:0000266"/>
    <property type="project" value="RGD"/>
</dbReference>
<dbReference type="GO" id="GO:0002218">
    <property type="term" value="P:activation of innate immune response"/>
    <property type="evidence" value="ECO:0000250"/>
    <property type="project" value="UniProtKB"/>
</dbReference>
<dbReference type="GO" id="GO:0140374">
    <property type="term" value="P:antiviral innate immune response"/>
    <property type="evidence" value="ECO:0000266"/>
    <property type="project" value="RGD"/>
</dbReference>
<dbReference type="GO" id="GO:0071360">
    <property type="term" value="P:cellular response to exogenous dsRNA"/>
    <property type="evidence" value="ECO:0000250"/>
    <property type="project" value="UniProtKB"/>
</dbReference>
<dbReference type="GO" id="GO:0002753">
    <property type="term" value="P:cytoplasmic pattern recognition receptor signaling pathway"/>
    <property type="evidence" value="ECO:0000266"/>
    <property type="project" value="RGD"/>
</dbReference>
<dbReference type="GO" id="GO:0042742">
    <property type="term" value="P:defense response to bacterium"/>
    <property type="evidence" value="ECO:0000250"/>
    <property type="project" value="UniProtKB"/>
</dbReference>
<dbReference type="GO" id="GO:0045087">
    <property type="term" value="P:innate immune response"/>
    <property type="evidence" value="ECO:0000250"/>
    <property type="project" value="UniProtKB"/>
</dbReference>
<dbReference type="GO" id="GO:0035556">
    <property type="term" value="P:intracellular signal transduction"/>
    <property type="evidence" value="ECO:0000266"/>
    <property type="project" value="RGD"/>
</dbReference>
<dbReference type="GO" id="GO:0060339">
    <property type="term" value="P:negative regulation of type I interferon-mediated signaling pathway"/>
    <property type="evidence" value="ECO:0000266"/>
    <property type="project" value="RGD"/>
</dbReference>
<dbReference type="GO" id="GO:0045071">
    <property type="term" value="P:negative regulation of viral genome replication"/>
    <property type="evidence" value="ECO:0000266"/>
    <property type="project" value="RGD"/>
</dbReference>
<dbReference type="GO" id="GO:0043123">
    <property type="term" value="P:positive regulation of canonical NF-kappaB signal transduction"/>
    <property type="evidence" value="ECO:0000266"/>
    <property type="project" value="RGD"/>
</dbReference>
<dbReference type="GO" id="GO:0071651">
    <property type="term" value="P:positive regulation of chemokine (C-C motif) ligand 5 production"/>
    <property type="evidence" value="ECO:0000266"/>
    <property type="project" value="RGD"/>
</dbReference>
<dbReference type="GO" id="GO:0002230">
    <property type="term" value="P:positive regulation of defense response to virus by host"/>
    <property type="evidence" value="ECO:0000250"/>
    <property type="project" value="UniProtKB"/>
</dbReference>
<dbReference type="GO" id="GO:0032727">
    <property type="term" value="P:positive regulation of interferon-alpha production"/>
    <property type="evidence" value="ECO:0000250"/>
    <property type="project" value="UniProtKB"/>
</dbReference>
<dbReference type="GO" id="GO:0032728">
    <property type="term" value="P:positive regulation of interferon-beta production"/>
    <property type="evidence" value="ECO:0000250"/>
    <property type="project" value="UniProtKB"/>
</dbReference>
<dbReference type="GO" id="GO:0032755">
    <property type="term" value="P:positive regulation of interleukin-6 production"/>
    <property type="evidence" value="ECO:0000250"/>
    <property type="project" value="UniProtKB"/>
</dbReference>
<dbReference type="GO" id="GO:0032757">
    <property type="term" value="P:positive regulation of interleukin-8 production"/>
    <property type="evidence" value="ECO:0000266"/>
    <property type="project" value="RGD"/>
</dbReference>
<dbReference type="GO" id="GO:0071660">
    <property type="term" value="P:positive regulation of IP-10 production"/>
    <property type="evidence" value="ECO:0000266"/>
    <property type="project" value="RGD"/>
</dbReference>
<dbReference type="GO" id="GO:0002735">
    <property type="term" value="P:positive regulation of myeloid dendritic cell cytokine production"/>
    <property type="evidence" value="ECO:0000250"/>
    <property type="project" value="UniProtKB"/>
</dbReference>
<dbReference type="GO" id="GO:1900227">
    <property type="term" value="P:positive regulation of NLRP3 inflammasome complex assembly"/>
    <property type="evidence" value="ECO:0000266"/>
    <property type="project" value="RGD"/>
</dbReference>
<dbReference type="GO" id="GO:0042307">
    <property type="term" value="P:positive regulation of protein import into nucleus"/>
    <property type="evidence" value="ECO:0000266"/>
    <property type="project" value="RGD"/>
</dbReference>
<dbReference type="GO" id="GO:0060760">
    <property type="term" value="P:positive regulation of response to cytokine stimulus"/>
    <property type="evidence" value="ECO:0000250"/>
    <property type="project" value="UniProtKB"/>
</dbReference>
<dbReference type="GO" id="GO:0045944">
    <property type="term" value="P:positive regulation of transcription by RNA polymerase II"/>
    <property type="evidence" value="ECO:0000266"/>
    <property type="project" value="RGD"/>
</dbReference>
<dbReference type="GO" id="GO:0032760">
    <property type="term" value="P:positive regulation of tumor necrosis factor production"/>
    <property type="evidence" value="ECO:0000250"/>
    <property type="project" value="UniProtKB"/>
</dbReference>
<dbReference type="GO" id="GO:0032481">
    <property type="term" value="P:positive regulation of type I interferon production"/>
    <property type="evidence" value="ECO:0000266"/>
    <property type="project" value="RGD"/>
</dbReference>
<dbReference type="GO" id="GO:0060340">
    <property type="term" value="P:positive regulation of type I interferon-mediated signaling pathway"/>
    <property type="evidence" value="ECO:0000266"/>
    <property type="project" value="RGD"/>
</dbReference>
<dbReference type="GO" id="GO:0070585">
    <property type="term" value="P:protein localization to mitochondrion"/>
    <property type="evidence" value="ECO:0000266"/>
    <property type="project" value="RGD"/>
</dbReference>
<dbReference type="GO" id="GO:1900063">
    <property type="term" value="P:regulation of peroxisome organization"/>
    <property type="evidence" value="ECO:0000266"/>
    <property type="project" value="RGD"/>
</dbReference>
<dbReference type="GO" id="GO:0039529">
    <property type="term" value="P:RIG-I signaling pathway"/>
    <property type="evidence" value="ECO:0000266"/>
    <property type="project" value="RGD"/>
</dbReference>
<dbReference type="GO" id="GO:0007165">
    <property type="term" value="P:signal transduction"/>
    <property type="evidence" value="ECO:0000266"/>
    <property type="project" value="RGD"/>
</dbReference>
<dbReference type="CDD" id="cd08811">
    <property type="entry name" value="CARD_IPS1"/>
    <property type="match status" value="1"/>
</dbReference>
<dbReference type="FunFam" id="1.10.533.10:FF:000063">
    <property type="entry name" value="Mitochondrial antiviral-signaling protein"/>
    <property type="match status" value="1"/>
</dbReference>
<dbReference type="Gene3D" id="1.10.533.10">
    <property type="entry name" value="Death Domain, Fas"/>
    <property type="match status" value="1"/>
</dbReference>
<dbReference type="InterPro" id="IPR031964">
    <property type="entry name" value="CARD_dom"/>
</dbReference>
<dbReference type="InterPro" id="IPR042144">
    <property type="entry name" value="CARD_IPS1"/>
</dbReference>
<dbReference type="InterPro" id="IPR011029">
    <property type="entry name" value="DEATH-like_dom_sf"/>
</dbReference>
<dbReference type="InterPro" id="IPR052787">
    <property type="entry name" value="MAVS"/>
</dbReference>
<dbReference type="PANTHER" id="PTHR21446">
    <property type="entry name" value="DUF3504 DOMAIN-CONTAINING PROTEIN"/>
    <property type="match status" value="1"/>
</dbReference>
<dbReference type="PANTHER" id="PTHR21446:SF6">
    <property type="entry name" value="MITOCHONDRIAL ANTIVIRAL-SIGNALING PROTEIN"/>
    <property type="match status" value="1"/>
</dbReference>
<dbReference type="Pfam" id="PF16739">
    <property type="entry name" value="CARD_2"/>
    <property type="match status" value="1"/>
</dbReference>
<gene>
    <name type="primary">Mavs</name>
    <name type="synonym">Ips1</name>
    <name type="synonym">Visa</name>
</gene>
<protein>
    <recommendedName>
        <fullName>Mitochondrial antiviral-signaling protein</fullName>
        <shortName>MAVS</shortName>
    </recommendedName>
    <alternativeName>
        <fullName>Interferon beta promoter stimulator protein 1</fullName>
        <shortName>IPS-1</shortName>
    </alternativeName>
    <alternativeName>
        <fullName>Virus-induced-signaling adapter</fullName>
        <shortName>VISA</shortName>
    </alternativeName>
</protein>
<reference key="1">
    <citation type="journal article" date="2004" name="Genome Res.">
        <title>The status, quality, and expansion of the NIH full-length cDNA project: the Mammalian Gene Collection (MGC).</title>
        <authorList>
            <consortium name="The MGC Project Team"/>
        </authorList>
    </citation>
    <scope>NUCLEOTIDE SEQUENCE [LARGE SCALE MRNA]</scope>
    <source>
        <tissue>Kidney</tissue>
    </source>
</reference>
<reference key="2">
    <citation type="journal article" date="2012" name="Nat. Commun.">
        <title>Quantitative maps of protein phosphorylation sites across 14 different rat organs and tissues.</title>
        <authorList>
            <person name="Lundby A."/>
            <person name="Secher A."/>
            <person name="Lage K."/>
            <person name="Nordsborg N.B."/>
            <person name="Dmytriyev A."/>
            <person name="Lundby C."/>
            <person name="Olsen J.V."/>
        </authorList>
    </citation>
    <scope>PHOSPHORYLATION [LARGE SCALE ANALYSIS] AT SER-152</scope>
    <scope>IDENTIFICATION BY MASS SPECTROMETRY [LARGE SCALE ANALYSIS]</scope>
</reference>